<comment type="function">
    <text evidence="2 7">Accessory component of the STT3B-containing form of the N-oligosaccharyl transferase (OST) complex which catalyzes the transfer of a high mannose oligosaccharide from a lipid-linked oligosaccharide donor to an asparagine residue within an Asn-X-Ser/Thr consensus motif in nascent polypeptide chains. Involved in N-glycosylation of STT3B-dependent substrates. Specifically required for the glycosylation of a subset of acceptor sites that are near cysteine residues; in this function seems to act redundantly with TUSC3. In its oxidized form proposed to form transient mixed disulfides with a glycoprotein substrate to facilitate access of STT3B to the unmodified acceptor site. Also has oxidoreductase-independent functions in the STT3B-containing OST complex possibly involving substrate recognition. Could indirectly play a role in Mg(2+) transport in epithelial cells (Probable).</text>
</comment>
<comment type="pathway">
    <text evidence="2">Protein modification; protein glycosylation.</text>
</comment>
<comment type="subunit">
    <text evidence="2">Accessory component of the STT3B-containing form of the oligosaccharyltransferase (OST) complex. OST exists in two different complex forms which contain common core subunits RPN1, RPN2, OST48, OST4, DAD1 and TMEM258, either STT3A or STT3B as catalytic subunits, and form-specific accessory subunits. OST can form stable complexes with the Sec61 complex or with both the Sec61 and TRAP complexes. The association of TUSC3 or MAGT1 with the STT3B-containing complex seems to be mutually exclusvice.</text>
</comment>
<comment type="subcellular location">
    <subcellularLocation>
        <location evidence="2">Cell membrane</location>
        <topology evidence="2">Multi-pass membrane protein</topology>
    </subcellularLocation>
    <subcellularLocation>
        <location evidence="2">Endoplasmic reticulum</location>
    </subcellularLocation>
    <subcellularLocation>
        <location evidence="1">Endoplasmic reticulum membrane</location>
        <topology evidence="1">Multi-pass membrane protein</topology>
    </subcellularLocation>
</comment>
<comment type="alternative products">
    <event type="alternative splicing"/>
    <isoform>
        <id>Q9CQY5-1</id>
        <name>1</name>
        <sequence type="displayed"/>
    </isoform>
    <isoform>
        <id>Q9CQY5-2</id>
        <name>2</name>
        <sequence type="described" ref="VSP_019822"/>
    </isoform>
    <isoform>
        <id>Q9CQY5-3</id>
        <name>3</name>
        <sequence type="described" ref="VSP_019823"/>
    </isoform>
</comment>
<comment type="tissue specificity">
    <text evidence="4">Expressed at high levels in kidney, colon, heart and liver. Expressed at lower levels in intestine, spleen, brain and lung.</text>
</comment>
<comment type="induction">
    <text evidence="4">Induced by low magnesium levels.</text>
</comment>
<comment type="similarity">
    <text evidence="6">Belongs to the OST3/OST6 family.</text>
</comment>
<reference key="1">
    <citation type="journal article" date="2005" name="BMC Genomics">
        <title>Identification and characterization of a novel mammalian Mg2+ transporter with channel-like properties.</title>
        <authorList>
            <person name="Goytain A."/>
            <person name="Quamme G.A."/>
        </authorList>
    </citation>
    <scope>NUCLEOTIDE SEQUENCE [MRNA] (ISOFORM 1)</scope>
    <scope>FUNCTION</scope>
    <scope>INDUCTION</scope>
    <scope>TISSUE SPECIFICITY</scope>
</reference>
<reference key="2">
    <citation type="journal article" date="2005" name="Science">
        <title>The transcriptional landscape of the mammalian genome.</title>
        <authorList>
            <person name="Carninci P."/>
            <person name="Kasukawa T."/>
            <person name="Katayama S."/>
            <person name="Gough J."/>
            <person name="Frith M.C."/>
            <person name="Maeda N."/>
            <person name="Oyama R."/>
            <person name="Ravasi T."/>
            <person name="Lenhard B."/>
            <person name="Wells C."/>
            <person name="Kodzius R."/>
            <person name="Shimokawa K."/>
            <person name="Bajic V.B."/>
            <person name="Brenner S.E."/>
            <person name="Batalov S."/>
            <person name="Forrest A.R."/>
            <person name="Zavolan M."/>
            <person name="Davis M.J."/>
            <person name="Wilming L.G."/>
            <person name="Aidinis V."/>
            <person name="Allen J.E."/>
            <person name="Ambesi-Impiombato A."/>
            <person name="Apweiler R."/>
            <person name="Aturaliya R.N."/>
            <person name="Bailey T.L."/>
            <person name="Bansal M."/>
            <person name="Baxter L."/>
            <person name="Beisel K.W."/>
            <person name="Bersano T."/>
            <person name="Bono H."/>
            <person name="Chalk A.M."/>
            <person name="Chiu K.P."/>
            <person name="Choudhary V."/>
            <person name="Christoffels A."/>
            <person name="Clutterbuck D.R."/>
            <person name="Crowe M.L."/>
            <person name="Dalla E."/>
            <person name="Dalrymple B.P."/>
            <person name="de Bono B."/>
            <person name="Della Gatta G."/>
            <person name="di Bernardo D."/>
            <person name="Down T."/>
            <person name="Engstrom P."/>
            <person name="Fagiolini M."/>
            <person name="Faulkner G."/>
            <person name="Fletcher C.F."/>
            <person name="Fukushima T."/>
            <person name="Furuno M."/>
            <person name="Futaki S."/>
            <person name="Gariboldi M."/>
            <person name="Georgii-Hemming P."/>
            <person name="Gingeras T.R."/>
            <person name="Gojobori T."/>
            <person name="Green R.E."/>
            <person name="Gustincich S."/>
            <person name="Harbers M."/>
            <person name="Hayashi Y."/>
            <person name="Hensch T.K."/>
            <person name="Hirokawa N."/>
            <person name="Hill D."/>
            <person name="Huminiecki L."/>
            <person name="Iacono M."/>
            <person name="Ikeo K."/>
            <person name="Iwama A."/>
            <person name="Ishikawa T."/>
            <person name="Jakt M."/>
            <person name="Kanapin A."/>
            <person name="Katoh M."/>
            <person name="Kawasawa Y."/>
            <person name="Kelso J."/>
            <person name="Kitamura H."/>
            <person name="Kitano H."/>
            <person name="Kollias G."/>
            <person name="Krishnan S.P."/>
            <person name="Kruger A."/>
            <person name="Kummerfeld S.K."/>
            <person name="Kurochkin I.V."/>
            <person name="Lareau L.F."/>
            <person name="Lazarevic D."/>
            <person name="Lipovich L."/>
            <person name="Liu J."/>
            <person name="Liuni S."/>
            <person name="McWilliam S."/>
            <person name="Madan Babu M."/>
            <person name="Madera M."/>
            <person name="Marchionni L."/>
            <person name="Matsuda H."/>
            <person name="Matsuzawa S."/>
            <person name="Miki H."/>
            <person name="Mignone F."/>
            <person name="Miyake S."/>
            <person name="Morris K."/>
            <person name="Mottagui-Tabar S."/>
            <person name="Mulder N."/>
            <person name="Nakano N."/>
            <person name="Nakauchi H."/>
            <person name="Ng P."/>
            <person name="Nilsson R."/>
            <person name="Nishiguchi S."/>
            <person name="Nishikawa S."/>
            <person name="Nori F."/>
            <person name="Ohara O."/>
            <person name="Okazaki Y."/>
            <person name="Orlando V."/>
            <person name="Pang K.C."/>
            <person name="Pavan W.J."/>
            <person name="Pavesi G."/>
            <person name="Pesole G."/>
            <person name="Petrovsky N."/>
            <person name="Piazza S."/>
            <person name="Reed J."/>
            <person name="Reid J.F."/>
            <person name="Ring B.Z."/>
            <person name="Ringwald M."/>
            <person name="Rost B."/>
            <person name="Ruan Y."/>
            <person name="Salzberg S.L."/>
            <person name="Sandelin A."/>
            <person name="Schneider C."/>
            <person name="Schoenbach C."/>
            <person name="Sekiguchi K."/>
            <person name="Semple C.A."/>
            <person name="Seno S."/>
            <person name="Sessa L."/>
            <person name="Sheng Y."/>
            <person name="Shibata Y."/>
            <person name="Shimada H."/>
            <person name="Shimada K."/>
            <person name="Silva D."/>
            <person name="Sinclair B."/>
            <person name="Sperling S."/>
            <person name="Stupka E."/>
            <person name="Sugiura K."/>
            <person name="Sultana R."/>
            <person name="Takenaka Y."/>
            <person name="Taki K."/>
            <person name="Tammoja K."/>
            <person name="Tan S.L."/>
            <person name="Tang S."/>
            <person name="Taylor M.S."/>
            <person name="Tegner J."/>
            <person name="Teichmann S.A."/>
            <person name="Ueda H.R."/>
            <person name="van Nimwegen E."/>
            <person name="Verardo R."/>
            <person name="Wei C.L."/>
            <person name="Yagi K."/>
            <person name="Yamanishi H."/>
            <person name="Zabarovsky E."/>
            <person name="Zhu S."/>
            <person name="Zimmer A."/>
            <person name="Hide W."/>
            <person name="Bult C."/>
            <person name="Grimmond S.M."/>
            <person name="Teasdale R.D."/>
            <person name="Liu E.T."/>
            <person name="Brusic V."/>
            <person name="Quackenbush J."/>
            <person name="Wahlestedt C."/>
            <person name="Mattick J.S."/>
            <person name="Hume D.A."/>
            <person name="Kai C."/>
            <person name="Sasaki D."/>
            <person name="Tomaru Y."/>
            <person name="Fukuda S."/>
            <person name="Kanamori-Katayama M."/>
            <person name="Suzuki M."/>
            <person name="Aoki J."/>
            <person name="Arakawa T."/>
            <person name="Iida J."/>
            <person name="Imamura K."/>
            <person name="Itoh M."/>
            <person name="Kato T."/>
            <person name="Kawaji H."/>
            <person name="Kawagashira N."/>
            <person name="Kawashima T."/>
            <person name="Kojima M."/>
            <person name="Kondo S."/>
            <person name="Konno H."/>
            <person name="Nakano K."/>
            <person name="Ninomiya N."/>
            <person name="Nishio T."/>
            <person name="Okada M."/>
            <person name="Plessy C."/>
            <person name="Shibata K."/>
            <person name="Shiraki T."/>
            <person name="Suzuki S."/>
            <person name="Tagami M."/>
            <person name="Waki K."/>
            <person name="Watahiki A."/>
            <person name="Okamura-Oho Y."/>
            <person name="Suzuki H."/>
            <person name="Kawai J."/>
            <person name="Hayashizaki Y."/>
        </authorList>
    </citation>
    <scope>NUCLEOTIDE SEQUENCE [LARGE SCALE MRNA] (ISOFORMS 1; 2 AND 3)</scope>
    <source>
        <strain>C57BL/6J</strain>
        <tissue>Cecum</tissue>
        <tissue>Epididymis</tissue>
        <tissue>Lung</tissue>
    </source>
</reference>
<reference key="3">
    <citation type="journal article" date="2004" name="Genome Res.">
        <title>The status, quality, and expansion of the NIH full-length cDNA project: the Mammalian Gene Collection (MGC).</title>
        <authorList>
            <consortium name="The MGC Project Team"/>
        </authorList>
    </citation>
    <scope>NUCLEOTIDE SEQUENCE [LARGE SCALE MRNA] (ISOFORM 1)</scope>
    <source>
        <strain>FVB/N</strain>
        <tissue>Mammary tumor</tissue>
    </source>
</reference>
<reference key="4">
    <citation type="journal article" date="2010" name="Cell">
        <title>A tissue-specific atlas of mouse protein phosphorylation and expression.</title>
        <authorList>
            <person name="Huttlin E.L."/>
            <person name="Jedrychowski M.P."/>
            <person name="Elias J.E."/>
            <person name="Goswami T."/>
            <person name="Rad R."/>
            <person name="Beausoleil S.A."/>
            <person name="Villen J."/>
            <person name="Haas W."/>
            <person name="Sowa M.E."/>
            <person name="Gygi S.P."/>
        </authorList>
    </citation>
    <scope>IDENTIFICATION BY MASS SPECTROMETRY [LARGE SCALE ANALYSIS]</scope>
    <source>
        <tissue>Heart</tissue>
        <tissue>Kidney</tissue>
        <tissue>Liver</tissue>
        <tissue>Lung</tissue>
        <tissue>Pancreas</tissue>
        <tissue>Spleen</tissue>
        <tissue>Testis</tissue>
    </source>
</reference>
<gene>
    <name evidence="8" type="primary">Magt1</name>
    <name type="synonym">Iag2</name>
</gene>
<protein>
    <recommendedName>
        <fullName>Dolichyl-diphosphooligosaccharide--protein glycosyltransferase subunit MAGT1</fullName>
        <shortName>Oligosaccharyl transferase subunit MAGT1</shortName>
    </recommendedName>
    <alternativeName>
        <fullName>Implantation-associated protein</fullName>
        <shortName>IAP</shortName>
    </alternativeName>
    <alternativeName>
        <fullName evidence="6">Magnesium transporter protein 1</fullName>
        <shortName>MagT1</shortName>
    </alternativeName>
</protein>
<evidence type="ECO:0000250" key="1"/>
<evidence type="ECO:0000250" key="2">
    <source>
        <dbReference type="UniProtKB" id="Q9H0U3"/>
    </source>
</evidence>
<evidence type="ECO:0000255" key="3"/>
<evidence type="ECO:0000269" key="4">
    <source>
    </source>
</evidence>
<evidence type="ECO:0000303" key="5">
    <source>
    </source>
</evidence>
<evidence type="ECO:0000305" key="6"/>
<evidence type="ECO:0000305" key="7">
    <source>
    </source>
</evidence>
<evidence type="ECO:0000312" key="8">
    <source>
        <dbReference type="MGI" id="MGI:1914325"/>
    </source>
</evidence>
<organism>
    <name type="scientific">Mus musculus</name>
    <name type="common">Mouse</name>
    <dbReference type="NCBI Taxonomy" id="10090"/>
    <lineage>
        <taxon>Eukaryota</taxon>
        <taxon>Metazoa</taxon>
        <taxon>Chordata</taxon>
        <taxon>Craniata</taxon>
        <taxon>Vertebrata</taxon>
        <taxon>Euteleostomi</taxon>
        <taxon>Mammalia</taxon>
        <taxon>Eutheria</taxon>
        <taxon>Euarchontoglires</taxon>
        <taxon>Glires</taxon>
        <taxon>Rodentia</taxon>
        <taxon>Myomorpha</taxon>
        <taxon>Muroidea</taxon>
        <taxon>Muridae</taxon>
        <taxon>Murinae</taxon>
        <taxon>Mus</taxon>
        <taxon>Mus</taxon>
    </lineage>
</organism>
<keyword id="KW-0025">Alternative splicing</keyword>
<keyword id="KW-1003">Cell membrane</keyword>
<keyword id="KW-1015">Disulfide bond</keyword>
<keyword id="KW-0256">Endoplasmic reticulum</keyword>
<keyword id="KW-0325">Glycoprotein</keyword>
<keyword id="KW-0460">Magnesium</keyword>
<keyword id="KW-0472">Membrane</keyword>
<keyword id="KW-1185">Reference proteome</keyword>
<keyword id="KW-0732">Signal</keyword>
<keyword id="KW-0812">Transmembrane</keyword>
<keyword id="KW-1133">Transmembrane helix</keyword>
<keyword id="KW-0813">Transport</keyword>
<accession>Q9CQY5</accession>
<accession>Q3UW45</accession>
<accession>Q9CWX5</accession>
<accession>Q9CZT3</accession>
<name>MAGT1_MOUSE</name>
<feature type="signal peptide" evidence="3">
    <location>
        <begin position="1"/>
        <end position="29"/>
    </location>
</feature>
<feature type="chain" id="PRO_0000246058" description="Dolichyl-diphosphooligosaccharide--protein glycosyltransferase subunit MAGT1">
    <location>
        <begin position="30"/>
        <end position="335"/>
    </location>
</feature>
<feature type="topological domain" description="Extracellular" evidence="3">
    <location>
        <begin position="30"/>
        <end position="184"/>
    </location>
</feature>
<feature type="transmembrane region" description="Helical" evidence="3">
    <location>
        <begin position="185"/>
        <end position="205"/>
    </location>
</feature>
<feature type="topological domain" description="Cytoplasmic" evidence="3">
    <location>
        <begin position="206"/>
        <end position="209"/>
    </location>
</feature>
<feature type="transmembrane region" description="Helical" evidence="3">
    <location>
        <begin position="210"/>
        <end position="230"/>
    </location>
</feature>
<feature type="topological domain" description="Extracellular" evidence="3">
    <location>
        <begin position="231"/>
        <end position="270"/>
    </location>
</feature>
<feature type="transmembrane region" description="Helical" evidence="3">
    <location>
        <begin position="271"/>
        <end position="291"/>
    </location>
</feature>
<feature type="topological domain" description="Cytoplasmic" evidence="3">
    <location>
        <begin position="292"/>
        <end position="300"/>
    </location>
</feature>
<feature type="transmembrane region" description="Helical" evidence="3">
    <location>
        <begin position="301"/>
        <end position="321"/>
    </location>
</feature>
<feature type="topological domain" description="Extracellular" evidence="3">
    <location>
        <begin position="322"/>
        <end position="335"/>
    </location>
</feature>
<feature type="domain" description="Thioredoxin">
    <location>
        <begin position="47"/>
        <end position="175"/>
    </location>
</feature>
<feature type="glycosylation site" description="N-linked (GlcNAc...) asparagine" evidence="3">
    <location>
        <position position="71"/>
    </location>
</feature>
<feature type="disulfide bond" description="Redox-active" evidence="1">
    <location>
        <begin position="87"/>
        <end position="90"/>
    </location>
</feature>
<feature type="splice variant" id="VSP_019822" description="In isoform 2." evidence="5">
    <original>MMCIAGIGLVVLFFSWMLSIFRSKYHGYPYSFLMS</original>
    <variation>NNFCQA</variation>
    <location>
        <begin position="301"/>
        <end position="335"/>
    </location>
</feature>
<feature type="splice variant" id="VSP_019823" description="In isoform 3." evidence="5">
    <original>MMCIAGIGLVVLFFSWMLSIFRSKYHGYPYSFLMS</original>
    <variation>TKSHVTMVQFCL</variation>
    <location>
        <begin position="301"/>
        <end position="335"/>
    </location>
</feature>
<feature type="sequence conflict" description="In Ref. 2; BAE23074." evidence="6" ref="2">
    <original>P</original>
    <variation>T</variation>
    <location>
        <position position="249"/>
    </location>
</feature>
<feature type="sequence conflict" description="In Ref. 1; AAY18812 and 2; BAB28085." evidence="6" ref="1 2">
    <original>I</original>
    <variation>N</variation>
    <location>
        <position position="307"/>
    </location>
</feature>
<dbReference type="EMBL" id="DQ000005">
    <property type="protein sequence ID" value="AAY18812.1"/>
    <property type="molecule type" value="mRNA"/>
</dbReference>
<dbReference type="EMBL" id="AK010320">
    <property type="protein sequence ID" value="BAB26851.1"/>
    <property type="molecule type" value="mRNA"/>
</dbReference>
<dbReference type="EMBL" id="AK018623">
    <property type="protein sequence ID" value="BAB31313.1"/>
    <property type="molecule type" value="mRNA"/>
</dbReference>
<dbReference type="EMBL" id="AK012185">
    <property type="protein sequence ID" value="BAB28085.1"/>
    <property type="molecule type" value="mRNA"/>
</dbReference>
<dbReference type="EMBL" id="AK136622">
    <property type="protein sequence ID" value="BAE23074.1"/>
    <property type="molecule type" value="mRNA"/>
</dbReference>
<dbReference type="EMBL" id="AK144696">
    <property type="protein sequence ID" value="BAE26020.1"/>
    <property type="molecule type" value="mRNA"/>
</dbReference>
<dbReference type="EMBL" id="AK013243">
    <property type="protein sequence ID" value="BAB28739.1"/>
    <property type="molecule type" value="mRNA"/>
</dbReference>
<dbReference type="EMBL" id="BC003881">
    <property type="protein sequence ID" value="AAH03881.1"/>
    <property type="molecule type" value="mRNA"/>
</dbReference>
<dbReference type="CCDS" id="CCDS53168.2">
    <molecule id="Q9CQY5-1"/>
</dbReference>
<dbReference type="RefSeq" id="NP_001177338.2">
    <molecule id="Q9CQY5-1"/>
    <property type="nucleotide sequence ID" value="NM_001190409.2"/>
</dbReference>
<dbReference type="RefSeq" id="NP_080228.4">
    <molecule id="Q9CQY5-1"/>
    <property type="nucleotide sequence ID" value="NM_025952.4"/>
</dbReference>
<dbReference type="SMR" id="Q9CQY5"/>
<dbReference type="ComplexPortal" id="CPX-5822">
    <property type="entry name" value="Oligosaccharyltransferase complex B, MAGT1 variant"/>
</dbReference>
<dbReference type="FunCoup" id="Q9CQY5">
    <property type="interactions" value="1377"/>
</dbReference>
<dbReference type="STRING" id="10090.ENSMUSP00000158823"/>
<dbReference type="GlyConnect" id="2498">
    <property type="glycosylation" value="1 N-Linked glycan (1 site)"/>
</dbReference>
<dbReference type="GlyCosmos" id="Q9CQY5">
    <property type="glycosylation" value="1 site, 1 glycan"/>
</dbReference>
<dbReference type="GlyGen" id="Q9CQY5">
    <property type="glycosylation" value="2 sites, 2 N-linked glycans (1 site), 1 O-linked glycan (1 site)"/>
</dbReference>
<dbReference type="iPTMnet" id="Q9CQY5"/>
<dbReference type="PhosphoSitePlus" id="Q9CQY5"/>
<dbReference type="SwissPalm" id="Q9CQY5"/>
<dbReference type="jPOST" id="Q9CQY5"/>
<dbReference type="PaxDb" id="10090-ENSMUSP00000120994"/>
<dbReference type="ProteomicsDB" id="252721">
    <molecule id="Q9CQY5-1"/>
</dbReference>
<dbReference type="ProteomicsDB" id="252722">
    <molecule id="Q9CQY5-2"/>
</dbReference>
<dbReference type="ProteomicsDB" id="252723">
    <molecule id="Q9CQY5-3"/>
</dbReference>
<dbReference type="Pumba" id="Q9CQY5"/>
<dbReference type="Antibodypedia" id="43998">
    <property type="antibodies" value="120 antibodies from 22 providers"/>
</dbReference>
<dbReference type="DNASU" id="67075"/>
<dbReference type="Ensembl" id="ENSMUST00000113566.10">
    <molecule id="Q9CQY5-1"/>
    <property type="protein sequence ID" value="ENSMUSP00000109196.4"/>
    <property type="gene ID" value="ENSMUSG00000031232.18"/>
</dbReference>
<dbReference type="Ensembl" id="ENSMUST00000139421.3">
    <molecule id="Q9CQY5-2"/>
    <property type="protein sequence ID" value="ENSMUSP00000115579.3"/>
    <property type="gene ID" value="ENSMUSG00000031232.18"/>
</dbReference>
<dbReference type="Ensembl" id="ENSMUST00000151689.9">
    <molecule id="Q9CQY5-1"/>
    <property type="protein sequence ID" value="ENSMUSP00000120994.3"/>
    <property type="gene ID" value="ENSMUSG00000031232.18"/>
</dbReference>
<dbReference type="GeneID" id="67075"/>
<dbReference type="KEGG" id="mmu:67075"/>
<dbReference type="AGR" id="MGI:1914325"/>
<dbReference type="CTD" id="84061"/>
<dbReference type="MGI" id="MGI:1914325">
    <property type="gene designation" value="Magt1"/>
</dbReference>
<dbReference type="VEuPathDB" id="HostDB:ENSMUSG00000031232"/>
<dbReference type="eggNOG" id="KOG2603">
    <property type="taxonomic scope" value="Eukaryota"/>
</dbReference>
<dbReference type="GeneTree" id="ENSGT00390000012030"/>
<dbReference type="InParanoid" id="Q9CQY5"/>
<dbReference type="OrthoDB" id="67566at2759"/>
<dbReference type="Reactome" id="R-MMU-5223345">
    <property type="pathway name" value="Miscellaneous transport and binding events"/>
</dbReference>
<dbReference type="Reactome" id="R-MMU-6798695">
    <property type="pathway name" value="Neutrophil degranulation"/>
</dbReference>
<dbReference type="UniPathway" id="UPA00378"/>
<dbReference type="ChiTaRS" id="Magt1">
    <property type="organism name" value="mouse"/>
</dbReference>
<dbReference type="PRO" id="PR:Q9CQY5"/>
<dbReference type="Proteomes" id="UP000000589">
    <property type="component" value="Chromosome X"/>
</dbReference>
<dbReference type="RNAct" id="Q9CQY5">
    <property type="molecule type" value="protein"/>
</dbReference>
<dbReference type="Bgee" id="ENSMUSG00000031232">
    <property type="expression patterns" value="Expressed in parotid gland and 243 other cell types or tissues"/>
</dbReference>
<dbReference type="ExpressionAtlas" id="Q9CQY5">
    <property type="expression patterns" value="baseline and differential"/>
</dbReference>
<dbReference type="GO" id="GO:0005789">
    <property type="term" value="C:endoplasmic reticulum membrane"/>
    <property type="evidence" value="ECO:0000303"/>
    <property type="project" value="ComplexPortal"/>
</dbReference>
<dbReference type="GO" id="GO:0008250">
    <property type="term" value="C:oligosaccharyltransferase complex"/>
    <property type="evidence" value="ECO:0000250"/>
    <property type="project" value="HGNC-UCL"/>
</dbReference>
<dbReference type="GO" id="GO:0005886">
    <property type="term" value="C:plasma membrane"/>
    <property type="evidence" value="ECO:0007669"/>
    <property type="project" value="UniProtKB-SubCell"/>
</dbReference>
<dbReference type="GO" id="GO:0006487">
    <property type="term" value="P:protein N-linked glycosylation"/>
    <property type="evidence" value="ECO:0000303"/>
    <property type="project" value="ComplexPortal"/>
</dbReference>
<dbReference type="FunFam" id="3.40.30.10:FF:000009">
    <property type="entry name" value="Tumor suppressor candidate 3"/>
    <property type="match status" value="1"/>
</dbReference>
<dbReference type="Gene3D" id="3.40.30.10">
    <property type="entry name" value="Glutaredoxin"/>
    <property type="match status" value="1"/>
</dbReference>
<dbReference type="InterPro" id="IPR021149">
    <property type="entry name" value="OligosaccharylTrfase_OST3/OST6"/>
</dbReference>
<dbReference type="InterPro" id="IPR036249">
    <property type="entry name" value="Thioredoxin-like_sf"/>
</dbReference>
<dbReference type="PANTHER" id="PTHR12692">
    <property type="entry name" value="DOLICHYL-DIPHOSPHOOLIGOSACCHARIDE--PROTEIN GLYCOSYLTRANSFERASE-RELATED"/>
    <property type="match status" value="1"/>
</dbReference>
<dbReference type="PANTHER" id="PTHR12692:SF2">
    <property type="entry name" value="MAGNESIUM TRANSPORTER PROTEIN 1"/>
    <property type="match status" value="1"/>
</dbReference>
<dbReference type="Pfam" id="PF04756">
    <property type="entry name" value="OST3_OST6"/>
    <property type="match status" value="1"/>
</dbReference>
<dbReference type="SUPFAM" id="SSF52833">
    <property type="entry name" value="Thioredoxin-like"/>
    <property type="match status" value="1"/>
</dbReference>
<sequence>MASPRWFWSVCAIAAVALLLVSKVPSASAQRKKEMVLSEKVSQLMEWANKRPVIRMNGDKFRRLVKAPPRNYSVVVMFTALQLHRQCVVCKQADEEFQILANSWRYSNAFTNRIFFAMVDFDEGSDVFQMLNMNSAPTFINFPPKGKPKRADTYELQVRGFSAEQIARWIADRTDVNIRVIRPPNYAGPLMLGLLLAVIGGLVYLRRSNMEFLFNKTGWAFAALCFVLAMTSGQMWNHIRGPPYAHKNPHTGHVNYIHGSSQAQFVAETHIVLLFNGGVTLGMVLLCEAATSDMDIGKRRMMCIAGIGLVVLFFSWMLSIFRSKYHGYPYSFLMS</sequence>
<proteinExistence type="evidence at protein level"/>